<feature type="signal peptide" description="Tat-type signal" evidence="4">
    <location>
        <begin position="1"/>
        <end position="44"/>
    </location>
</feature>
<feature type="chain" id="PRO_0000070684" description="Protein-methionine-sulfoxide reductase catalytic subunit MsrP">
    <location>
        <begin position="45"/>
        <end position="334"/>
    </location>
</feature>
<feature type="binding site" evidence="2">
    <location>
        <position position="88"/>
    </location>
    <ligand>
        <name>Mo-molybdopterin</name>
        <dbReference type="ChEBI" id="CHEBI:71302"/>
    </ligand>
</feature>
<feature type="binding site" evidence="2">
    <location>
        <begin position="91"/>
        <end position="92"/>
    </location>
    <ligand>
        <name>Mo-molybdopterin</name>
        <dbReference type="ChEBI" id="CHEBI:71302"/>
    </ligand>
</feature>
<feature type="binding site" evidence="2">
    <location>
        <position position="146"/>
    </location>
    <ligand>
        <name>Mo-molybdopterin</name>
        <dbReference type="ChEBI" id="CHEBI:71302"/>
    </ligand>
    <ligandPart>
        <name>Mo</name>
        <dbReference type="ChEBI" id="CHEBI:28685"/>
    </ligandPart>
</feature>
<feature type="binding site" evidence="2">
    <location>
        <position position="181"/>
    </location>
    <ligand>
        <name>Mo-molybdopterin</name>
        <dbReference type="ChEBI" id="CHEBI:71302"/>
    </ligand>
</feature>
<feature type="binding site" evidence="2">
    <location>
        <position position="233"/>
    </location>
    <ligand>
        <name>Mo-molybdopterin</name>
        <dbReference type="ChEBI" id="CHEBI:71302"/>
    </ligand>
</feature>
<feature type="binding site" evidence="2">
    <location>
        <position position="238"/>
    </location>
    <ligand>
        <name>Mo-molybdopterin</name>
        <dbReference type="ChEBI" id="CHEBI:71302"/>
    </ligand>
</feature>
<feature type="binding site" evidence="2">
    <location>
        <begin position="249"/>
        <end position="251"/>
    </location>
    <ligand>
        <name>Mo-molybdopterin</name>
        <dbReference type="ChEBI" id="CHEBI:71302"/>
    </ligand>
</feature>
<feature type="mutagenesis site" description="Loss of enzymatic activity. Enhances binding to MsrQ and targeting to the inner membrane." evidence="3">
    <original>C</original>
    <variation>S</variation>
    <location>
        <position position="146"/>
    </location>
</feature>
<feature type="helix" evidence="10">
    <location>
        <begin position="70"/>
        <end position="72"/>
    </location>
</feature>
<feature type="helix" evidence="10">
    <location>
        <begin position="81"/>
        <end position="84"/>
    </location>
</feature>
<feature type="helix" evidence="10">
    <location>
        <begin position="91"/>
        <end position="93"/>
    </location>
</feature>
<feature type="helix" evidence="10">
    <location>
        <begin position="99"/>
        <end position="103"/>
    </location>
</feature>
<feature type="helix" evidence="10">
    <location>
        <begin position="104"/>
        <end position="106"/>
    </location>
</feature>
<feature type="strand" evidence="10">
    <location>
        <begin position="113"/>
        <end position="122"/>
    </location>
</feature>
<feature type="strand" evidence="10">
    <location>
        <begin position="124"/>
        <end position="127"/>
    </location>
</feature>
<feature type="helix" evidence="10">
    <location>
        <begin position="128"/>
        <end position="133"/>
    </location>
</feature>
<feature type="strand" evidence="10">
    <location>
        <begin position="138"/>
        <end position="146"/>
    </location>
</feature>
<feature type="turn" evidence="10">
    <location>
        <begin position="147"/>
        <end position="149"/>
    </location>
</feature>
<feature type="strand" evidence="10">
    <location>
        <begin position="150"/>
        <end position="160"/>
    </location>
</feature>
<feature type="helix" evidence="10">
    <location>
        <begin position="161"/>
        <end position="168"/>
    </location>
</feature>
<feature type="strand" evidence="10">
    <location>
        <begin position="176"/>
        <end position="181"/>
    </location>
</feature>
<feature type="turn" evidence="10">
    <location>
        <begin position="185"/>
        <end position="187"/>
    </location>
</feature>
<feature type="helix" evidence="10">
    <location>
        <begin position="189"/>
        <end position="191"/>
    </location>
</feature>
<feature type="turn" evidence="10">
    <location>
        <begin position="194"/>
        <end position="199"/>
    </location>
</feature>
<feature type="strand" evidence="10">
    <location>
        <begin position="205"/>
        <end position="209"/>
    </location>
</feature>
<feature type="helix" evidence="10">
    <location>
        <begin position="210"/>
        <end position="214"/>
    </location>
</feature>
<feature type="strand" evidence="10">
    <location>
        <begin position="219"/>
        <end position="224"/>
    </location>
</feature>
<feature type="helix" evidence="10">
    <location>
        <begin position="231"/>
        <end position="233"/>
    </location>
</feature>
<feature type="strand" evidence="10">
    <location>
        <begin position="238"/>
        <end position="240"/>
    </location>
</feature>
<feature type="helix" evidence="10">
    <location>
        <begin position="246"/>
        <end position="248"/>
    </location>
</feature>
<feature type="strand" evidence="10">
    <location>
        <begin position="252"/>
        <end position="261"/>
    </location>
</feature>
<feature type="helix" evidence="10">
    <location>
        <begin position="266"/>
        <end position="270"/>
    </location>
</feature>
<feature type="turn" evidence="10">
    <location>
        <begin position="272"/>
        <end position="274"/>
    </location>
</feature>
<feature type="strand" evidence="10">
    <location>
        <begin position="293"/>
        <end position="297"/>
    </location>
</feature>
<feature type="strand" evidence="9">
    <location>
        <begin position="308"/>
        <end position="310"/>
    </location>
</feature>
<feature type="helix" evidence="10">
    <location>
        <begin position="313"/>
        <end position="316"/>
    </location>
</feature>
<feature type="helix" evidence="10">
    <location>
        <begin position="318"/>
        <end position="325"/>
    </location>
</feature>
<comment type="function">
    <text evidence="2 5">Part of the MsrPQ system that repairs oxidized periplasmic proteins containing methionine sulfoxide residues (Met-O), using respiratory chain electrons (PubMed:26641313). Thus protects these proteins from oxidative-stress damage caused by reactive species of oxygen and chlorine (PubMed:26641313). MsrPQ is essential for the maintenance of envelope integrity under bleach stress, rescuing a wide series of structurally unrelated periplasmic proteins from methionine oxidation, including the primary periplasmic chaperone SurA and the lipoprotein Pal (PubMed:26641313). The catalytic subunit MsrP is non-stereospecific, being able to reduce both (R-) and (S-) diastereoisomers of methionine sulfoxide (PubMed:26641313). Can catalyze the reduction of a variety of substrates in vitro, including dimethyl sulfoxide, trimethylamine N-oxide, phenylmethyl sulfoxide and L-methionine sulfoxide (PubMed:15355966). Cannot reduce cyclic N-oxides (PubMed:15355966). Shows no activity as sulfite oxidase (PubMed:15355966).</text>
</comment>
<comment type="catalytic activity">
    <reaction evidence="5">
        <text>L-methionyl-[protein] + a quinone + H2O = L-methionyl-(S)-S-oxide-[protein] + a quinol</text>
        <dbReference type="Rhea" id="RHEA:51292"/>
        <dbReference type="Rhea" id="RHEA-COMP:12313"/>
        <dbReference type="Rhea" id="RHEA-COMP:12315"/>
        <dbReference type="ChEBI" id="CHEBI:15377"/>
        <dbReference type="ChEBI" id="CHEBI:16044"/>
        <dbReference type="ChEBI" id="CHEBI:24646"/>
        <dbReference type="ChEBI" id="CHEBI:44120"/>
        <dbReference type="ChEBI" id="CHEBI:132124"/>
    </reaction>
</comment>
<comment type="catalytic activity">
    <reaction evidence="5">
        <text>L-methionyl-[protein] + a quinone + H2O = L-methionyl-(R)-S-oxide-[protein] + a quinol</text>
        <dbReference type="Rhea" id="RHEA:51296"/>
        <dbReference type="Rhea" id="RHEA-COMP:12313"/>
        <dbReference type="Rhea" id="RHEA-COMP:12314"/>
        <dbReference type="ChEBI" id="CHEBI:15377"/>
        <dbReference type="ChEBI" id="CHEBI:16044"/>
        <dbReference type="ChEBI" id="CHEBI:24646"/>
        <dbReference type="ChEBI" id="CHEBI:45764"/>
        <dbReference type="ChEBI" id="CHEBI:132124"/>
    </reaction>
</comment>
<comment type="cofactor">
    <cofactor evidence="2">
        <name>Mo-molybdopterin</name>
        <dbReference type="ChEBI" id="CHEBI:71302"/>
    </cofactor>
    <text evidence="2">Binds 1 Mo-molybdopterin (Mo-MPT) cofactor per subunit. The oxidation state of Mo is +5. Is inactive in the presence of the tungsten-substituted form (W-MPT) of the cofactor.</text>
</comment>
<comment type="biophysicochemical properties">
    <kinetics>
        <KM evidence="2">12 mM for dimethyl sulfoxide</KM>
        <KM evidence="2">22 mM for trimethylamine N-oxide</KM>
        <KM evidence="2">27.9 mM for tetramethylene sulfoxide</KM>
        <KM evidence="2">119 mM for L-methionine sulfoxide</KM>
        <KM evidence="5">3.8 mM for N-acetyl-Met-O</KM>
        <KM evidence="5">8 mM for L-methionine (S)-S-oxide</KM>
        <KM evidence="5">25.7 mM for L-methionine (R)-S-oxide</KM>
        <Vmax evidence="5">56.3 umol/min/mg enzyme with N-acetyl-Met-O as substrate</Vmax>
        <Vmax evidence="5">67.2 umol/min/mg enzyme with L-methionine (S)-S-oxide as substrate</Vmax>
        <Vmax evidence="5">313.4 umol/min/mg enzyme with L-methionine (R)-S-oxide as substrate</Vmax>
        <text evidence="5">kcat is 30.5 sec(-1) with N-acetyl-Met-O as substrate. kcat is 36.0 sec(-1) with L-methionine (S)-S-oxide as substrate. kcat is 168.3 sec(-1) with L-methionine (R)-S-oxide as substrate.</text>
    </kinetics>
</comment>
<comment type="subunit">
    <text evidence="3">Heterodimer of a catalytic subunit (MsrP) and a heme-binding subunit (MsrQ).</text>
</comment>
<comment type="subcellular location">
    <subcellularLocation>
        <location evidence="3">Periplasm</location>
    </subcellularLocation>
    <text>Is attached to the inner membrane when interacting with the MsrQ subunit.</text>
</comment>
<comment type="induction">
    <text evidence="5">Is induced at protein level by hypochlorous acid (HOCl), a powerful antimicrobial released by neutrophils, but not by H(2)O(2). Induction by HOCl is dependent on the presence of a functional YedV/YedW two-component system.</text>
</comment>
<comment type="PTM">
    <text evidence="4">Exported by the Tat system. Can also be exported by the Sec system.</text>
</comment>
<comment type="disruption phenotype">
    <text evidence="3">Cells lacking the msrPQ genes display no visible growth defect.</text>
</comment>
<comment type="similarity">
    <text evidence="1">Belongs to the MsrP family.</text>
</comment>
<accession>P76342</accession>
<accession>Q2MAZ7</accession>
<name>MSRP_ECOLI</name>
<evidence type="ECO:0000255" key="1">
    <source>
        <dbReference type="HAMAP-Rule" id="MF_01206"/>
    </source>
</evidence>
<evidence type="ECO:0000269" key="2">
    <source>
    </source>
</evidence>
<evidence type="ECO:0000269" key="3">
    <source>
    </source>
</evidence>
<evidence type="ECO:0000269" key="4">
    <source>
    </source>
</evidence>
<evidence type="ECO:0000269" key="5">
    <source>
    </source>
</evidence>
<evidence type="ECO:0000303" key="6">
    <source>
    </source>
</evidence>
<evidence type="ECO:0000305" key="7">
    <source>
    </source>
</evidence>
<evidence type="ECO:0000312" key="8">
    <source>
        <dbReference type="EMBL" id="AAC75037.1"/>
    </source>
</evidence>
<evidence type="ECO:0007829" key="9">
    <source>
        <dbReference type="PDB" id="1XDQ"/>
    </source>
</evidence>
<evidence type="ECO:0007829" key="10">
    <source>
        <dbReference type="PDB" id="1XDY"/>
    </source>
</evidence>
<keyword id="KW-0002">3D-structure</keyword>
<keyword id="KW-0903">Direct protein sequencing</keyword>
<keyword id="KW-0479">Metal-binding</keyword>
<keyword id="KW-0500">Molybdenum</keyword>
<keyword id="KW-0560">Oxidoreductase</keyword>
<keyword id="KW-0574">Periplasm</keyword>
<keyword id="KW-1185">Reference proteome</keyword>
<keyword id="KW-0732">Signal</keyword>
<dbReference type="EC" id="1.8.5.-" evidence="1 5"/>
<dbReference type="EMBL" id="U00096">
    <property type="protein sequence ID" value="AAC75037.1"/>
    <property type="molecule type" value="Genomic_DNA"/>
</dbReference>
<dbReference type="EMBL" id="AP009048">
    <property type="protein sequence ID" value="BAE76559.1"/>
    <property type="molecule type" value="Genomic_DNA"/>
</dbReference>
<dbReference type="PIR" id="G64961">
    <property type="entry name" value="G64961"/>
</dbReference>
<dbReference type="RefSeq" id="NP_416480.1">
    <property type="nucleotide sequence ID" value="NC_000913.3"/>
</dbReference>
<dbReference type="RefSeq" id="WP_000740106.1">
    <property type="nucleotide sequence ID" value="NZ_CP064677.1"/>
</dbReference>
<dbReference type="PDB" id="1XDQ">
    <property type="method" value="X-ray"/>
    <property type="resolution" value="2.55 A"/>
    <property type="chains" value="A/B/C/D/E=45-334"/>
</dbReference>
<dbReference type="PDB" id="1XDY">
    <property type="method" value="X-ray"/>
    <property type="resolution" value="2.20 A"/>
    <property type="chains" value="A/B/C/D/E/F/G/H/I/J=45-334"/>
</dbReference>
<dbReference type="PDBsum" id="1XDQ"/>
<dbReference type="PDBsum" id="1XDY"/>
<dbReference type="SMR" id="P76342"/>
<dbReference type="BioGRID" id="4259675">
    <property type="interactions" value="57"/>
</dbReference>
<dbReference type="DIP" id="DIP-47888N"/>
<dbReference type="FunCoup" id="P76342">
    <property type="interactions" value="91"/>
</dbReference>
<dbReference type="IntAct" id="P76342">
    <property type="interactions" value="2"/>
</dbReference>
<dbReference type="STRING" id="511145.b1971"/>
<dbReference type="jPOST" id="P76342"/>
<dbReference type="PaxDb" id="511145-b1971"/>
<dbReference type="EnsemblBacteria" id="AAC75037">
    <property type="protein sequence ID" value="AAC75037"/>
    <property type="gene ID" value="b1971"/>
</dbReference>
<dbReference type="GeneID" id="946484"/>
<dbReference type="KEGG" id="ecj:JW1954"/>
<dbReference type="KEGG" id="eco:b1971"/>
<dbReference type="PATRIC" id="fig|511145.12.peg.2051"/>
<dbReference type="EchoBASE" id="EB3800"/>
<dbReference type="eggNOG" id="COG2041">
    <property type="taxonomic scope" value="Bacteria"/>
</dbReference>
<dbReference type="HOGENOM" id="CLU_045520_0_0_6"/>
<dbReference type="InParanoid" id="P76342"/>
<dbReference type="PhylomeDB" id="P76342"/>
<dbReference type="BioCyc" id="EcoCyc:G7059-MONOMER"/>
<dbReference type="BioCyc" id="MetaCyc:G7059-MONOMER"/>
<dbReference type="BRENDA" id="1.8.5.B1">
    <property type="organism ID" value="2026"/>
</dbReference>
<dbReference type="EvolutionaryTrace" id="P76342"/>
<dbReference type="PRO" id="PR:P76342"/>
<dbReference type="Proteomes" id="UP000000625">
    <property type="component" value="Chromosome"/>
</dbReference>
<dbReference type="GO" id="GO:0030288">
    <property type="term" value="C:outer membrane-bounded periplasmic space"/>
    <property type="evidence" value="ECO:0000314"/>
    <property type="project" value="EcoCyc"/>
</dbReference>
<dbReference type="GO" id="GO:0046872">
    <property type="term" value="F:metal ion binding"/>
    <property type="evidence" value="ECO:0007669"/>
    <property type="project" value="UniProtKB-KW"/>
</dbReference>
<dbReference type="GO" id="GO:0043546">
    <property type="term" value="F:molybdopterin cofactor binding"/>
    <property type="evidence" value="ECO:0000314"/>
    <property type="project" value="EcoCyc"/>
</dbReference>
<dbReference type="GO" id="GO:0016675">
    <property type="term" value="F:oxidoreductase activity, acting on a heme group of donors"/>
    <property type="evidence" value="ECO:0000314"/>
    <property type="project" value="EcoCyc"/>
</dbReference>
<dbReference type="GO" id="GO:0016672">
    <property type="term" value="F:oxidoreductase activity, acting on a sulfur group of donors, quinone or similar compound as acceptor"/>
    <property type="evidence" value="ECO:0000316"/>
    <property type="project" value="UniProtKB"/>
</dbReference>
<dbReference type="GO" id="GO:0030091">
    <property type="term" value="P:protein repair"/>
    <property type="evidence" value="ECO:0000314"/>
    <property type="project" value="UniProtKB"/>
</dbReference>
<dbReference type="GO" id="GO:1901530">
    <property type="term" value="P:response to hypochlorite"/>
    <property type="evidence" value="ECO:0000314"/>
    <property type="project" value="UniProtKB"/>
</dbReference>
<dbReference type="CDD" id="cd02107">
    <property type="entry name" value="YedY_like_Moco"/>
    <property type="match status" value="1"/>
</dbReference>
<dbReference type="FunFam" id="3.90.420.10:FF:000001">
    <property type="entry name" value="Protein-methionine-sulfoxide reductase catalytic subunit MsrP"/>
    <property type="match status" value="1"/>
</dbReference>
<dbReference type="Gene3D" id="3.90.420.10">
    <property type="entry name" value="Oxidoreductase, molybdopterin-binding domain"/>
    <property type="match status" value="1"/>
</dbReference>
<dbReference type="HAMAP" id="MF_01206">
    <property type="entry name" value="MsrP"/>
    <property type="match status" value="1"/>
</dbReference>
<dbReference type="InterPro" id="IPR022867">
    <property type="entry name" value="MsrP"/>
</dbReference>
<dbReference type="InterPro" id="IPR000572">
    <property type="entry name" value="OxRdtase_Mopterin-bd_dom"/>
</dbReference>
<dbReference type="InterPro" id="IPR036374">
    <property type="entry name" value="OxRdtase_Mopterin-bd_sf"/>
</dbReference>
<dbReference type="InterPro" id="IPR006311">
    <property type="entry name" value="TAT_signal"/>
</dbReference>
<dbReference type="NCBIfam" id="NF003767">
    <property type="entry name" value="PRK05363.1"/>
    <property type="match status" value="1"/>
</dbReference>
<dbReference type="PANTHER" id="PTHR43032">
    <property type="entry name" value="PROTEIN-METHIONINE-SULFOXIDE REDUCTASE"/>
    <property type="match status" value="1"/>
</dbReference>
<dbReference type="PANTHER" id="PTHR43032:SF3">
    <property type="entry name" value="PROTEIN-METHIONINE-SULFOXIDE REDUCTASE CATALYTIC SUBUNIT MSRP"/>
    <property type="match status" value="1"/>
</dbReference>
<dbReference type="Pfam" id="PF00174">
    <property type="entry name" value="Oxidored_molyb"/>
    <property type="match status" value="1"/>
</dbReference>
<dbReference type="SUPFAM" id="SSF56524">
    <property type="entry name" value="Oxidoreductase molybdopterin-binding domain"/>
    <property type="match status" value="1"/>
</dbReference>
<dbReference type="PROSITE" id="PS51318">
    <property type="entry name" value="TAT"/>
    <property type="match status" value="1"/>
</dbReference>
<organism>
    <name type="scientific">Escherichia coli (strain K12)</name>
    <dbReference type="NCBI Taxonomy" id="83333"/>
    <lineage>
        <taxon>Bacteria</taxon>
        <taxon>Pseudomonadati</taxon>
        <taxon>Pseudomonadota</taxon>
        <taxon>Gammaproteobacteria</taxon>
        <taxon>Enterobacterales</taxon>
        <taxon>Enterobacteriaceae</taxon>
        <taxon>Escherichia</taxon>
    </lineage>
</organism>
<sequence>MKKNQFLKESDVTAESVFFMKRRQVLKALGISATALSLPHAAHADLLSWFKGNDRPPAPAGKALEFSKPAAWQNNLPLTPADKVSGYNNFYEFGLDKADPAANAGSLKTDPWTLKISGEVAKPLTLDHDDLTRRFPLEERIYRMRCVEAWSMVVPWIGFPLHKLLALAEPTSNAKYVAFETIYAPEQMPGQQDRFIGGGLKYPYVEGLRLDEAMHPLTLMTVGVYGKALPPQNGAPVRLIVPWKYGFKGIKSIVSIKLTRERPPTTWNLAAPDEYGFYANVNPYVDHPRWSQATERFIGSGGILDVQRQPTLLFNGYAAQVASLYRGLDLRENF</sequence>
<proteinExistence type="evidence at protein level"/>
<reference key="1">
    <citation type="journal article" date="1997" name="Science">
        <title>The complete genome sequence of Escherichia coli K-12.</title>
        <authorList>
            <person name="Blattner F.R."/>
            <person name="Plunkett G. III"/>
            <person name="Bloch C.A."/>
            <person name="Perna N.T."/>
            <person name="Burland V."/>
            <person name="Riley M."/>
            <person name="Collado-Vides J."/>
            <person name="Glasner J.D."/>
            <person name="Rode C.K."/>
            <person name="Mayhew G.F."/>
            <person name="Gregor J."/>
            <person name="Davis N.W."/>
            <person name="Kirkpatrick H.A."/>
            <person name="Goeden M.A."/>
            <person name="Rose D.J."/>
            <person name="Mau B."/>
            <person name="Shao Y."/>
        </authorList>
    </citation>
    <scope>NUCLEOTIDE SEQUENCE [LARGE SCALE GENOMIC DNA]</scope>
    <source>
        <strain>K12 / MG1655 / ATCC 47076</strain>
    </source>
</reference>
<reference key="2">
    <citation type="journal article" date="2006" name="Mol. Syst. Biol.">
        <title>Highly accurate genome sequences of Escherichia coli K-12 strains MG1655 and W3110.</title>
        <authorList>
            <person name="Hayashi K."/>
            <person name="Morooka N."/>
            <person name="Yamamoto Y."/>
            <person name="Fujita K."/>
            <person name="Isono K."/>
            <person name="Choi S."/>
            <person name="Ohtsubo E."/>
            <person name="Baba T."/>
            <person name="Wanner B.L."/>
            <person name="Mori H."/>
            <person name="Horiuchi T."/>
        </authorList>
    </citation>
    <scope>NUCLEOTIDE SEQUENCE [LARGE SCALE GENOMIC DNA]</scope>
    <source>
        <strain>K12 / W3110 / ATCC 27325 / DSM 5911</strain>
    </source>
</reference>
<reference key="3">
    <citation type="journal article" date="2004" name="J. Biol. Chem.">
        <title>Structural and biochemical identification of a novel bacterial oxidoreductase.</title>
        <authorList>
            <person name="Loschi L."/>
            <person name="Brokx S.J."/>
            <person name="Hills T.L."/>
            <person name="Zhang G."/>
            <person name="Bertero M.G."/>
            <person name="Lovering A.L."/>
            <person name="Weiner J.H."/>
            <person name="Strynadka N.C."/>
        </authorList>
    </citation>
    <scope>PROTEIN SEQUENCE OF 45-50</scope>
    <scope>X-RAY CRYSTALLOGRAPHY (2.2 ANGSTROMS) OF 45-334 IN COMPLEXES WITH MOLYBDOPTERIN AND MOLYBDENUM OR TUNGSTEN</scope>
    <scope>FUNCTION</scope>
    <scope>COFACTOR</scope>
    <scope>BIOPHYSICOCHEMICAL PROPERTIES</scope>
    <scope>IDENTIFICATION BY MASS SPECTROMETRY</scope>
</reference>
<reference key="4">
    <citation type="journal article" date="2007" name="J. Biol. Chem.">
        <title>Export pathway selectivity of Escherichia coli twin arginine translocation signal peptides.</title>
        <authorList>
            <person name="Tullman-Ercek D."/>
            <person name="DeLisa M.P."/>
            <person name="Kawarasaki Y."/>
            <person name="Iranpour P."/>
            <person name="Ribnicky B."/>
            <person name="Palmer T."/>
            <person name="Georgiou G."/>
        </authorList>
    </citation>
    <scope>EXPORT VIA THE TAT-SYSTEM AND THE SEC-SYSTEM</scope>
</reference>
<reference key="5">
    <citation type="journal article" date="2005" name="Biochemistry">
        <title>Characterization of an Escherichia coli sulfite oxidase homologue reveals the role of a conserved active site cysteine in assembly and function.</title>
        <authorList>
            <person name="Brokx S.J."/>
            <person name="Rothery R.A."/>
            <person name="Zhang G."/>
            <person name="Ng D.P."/>
            <person name="Weiner J.H."/>
        </authorList>
    </citation>
    <scope>SUBCELLULAR LOCATION</scope>
    <scope>DISRUPTION PHENOTYPE</scope>
    <scope>EPR SPECTROSCOPY</scope>
    <scope>MUTAGENESIS OF CYS-146</scope>
    <scope>SUBUNIT</scope>
    <scope>INTERACTION WITH MSRQ</scope>
    <source>
        <strain>K12 / MG1655 / ATCC 47076</strain>
    </source>
</reference>
<reference key="6">
    <citation type="journal article" date="2009" name="J. Am. Chem. Soc.">
        <title>Spectroscopic characterization of YedY: the role of sulfur coordination in a Mo(V) sulfite oxidase family enzyme form.</title>
        <authorList>
            <person name="Yang J."/>
            <person name="Rothery R."/>
            <person name="Sempombe J."/>
            <person name="Weiner J.H."/>
            <person name="Kirk M.L."/>
        </authorList>
    </citation>
    <scope>CHARACTERIZATION OF MO ION WITH ELECTRONIC ABSORPTION; MAGNETIC CIRCULAR DICHROISM AND EPR SPECTROSCOPY</scope>
</reference>
<reference key="7">
    <citation type="journal article" date="2015" name="Nature">
        <title>Repairing oxidized proteins in the bacterial envelope using respiratory chain electrons.</title>
        <authorList>
            <person name="Gennaris A."/>
            <person name="Ezraty B."/>
            <person name="Henry C."/>
            <person name="Agrebi R."/>
            <person name="Vergnes A."/>
            <person name="Oheix E."/>
            <person name="Bos J."/>
            <person name="Leverrier P."/>
            <person name="Espinosa L."/>
            <person name="Szewczyk J."/>
            <person name="Vertommen D."/>
            <person name="Iranzo O."/>
            <person name="Collet J.F."/>
            <person name="Barras F."/>
        </authorList>
    </citation>
    <scope>FUNCTION</scope>
    <scope>CATALYTIC ACTIVITY</scope>
    <scope>BIOPHYSICOCHEMICAL PROPERTIES</scope>
    <scope>PROTEIN SUBSTRATES</scope>
    <scope>INDUCTION</scope>
    <source>
        <strain>K12</strain>
    </source>
</reference>
<protein>
    <recommendedName>
        <fullName evidence="1 7">Protein-methionine-sulfoxide reductase catalytic subunit MsrP</fullName>
        <ecNumber evidence="1 5">1.8.5.-</ecNumber>
    </recommendedName>
</protein>
<gene>
    <name evidence="6" type="primary">msrP</name>
    <name evidence="8" type="synonym">yedY</name>
    <name type="ordered locus">b1971</name>
    <name type="ordered locus">JW1954</name>
</gene>